<organism>
    <name type="scientific">Arabidopsis thaliana</name>
    <name type="common">Mouse-ear cress</name>
    <dbReference type="NCBI Taxonomy" id="3702"/>
    <lineage>
        <taxon>Eukaryota</taxon>
        <taxon>Viridiplantae</taxon>
        <taxon>Streptophyta</taxon>
        <taxon>Embryophyta</taxon>
        <taxon>Tracheophyta</taxon>
        <taxon>Spermatophyta</taxon>
        <taxon>Magnoliopsida</taxon>
        <taxon>eudicotyledons</taxon>
        <taxon>Gunneridae</taxon>
        <taxon>Pentapetalae</taxon>
        <taxon>rosids</taxon>
        <taxon>malvids</taxon>
        <taxon>Brassicales</taxon>
        <taxon>Brassicaceae</taxon>
        <taxon>Camelineae</taxon>
        <taxon>Arabidopsis</taxon>
    </lineage>
</organism>
<feature type="transit peptide" description="Chloroplast" evidence="2">
    <location>
        <begin position="1"/>
        <end position="52"/>
    </location>
</feature>
<feature type="chain" id="PRO_0000016482" description="2-C-methyl-D-erythritol 2,4-cyclodiphosphate synthase, chloroplastic">
    <location>
        <begin position="53"/>
        <end position="231"/>
    </location>
</feature>
<feature type="binding site" evidence="1">
    <location>
        <begin position="82"/>
        <end position="84"/>
    </location>
    <ligand>
        <name>substrate</name>
    </ligand>
</feature>
<feature type="binding site" evidence="16">
    <location>
        <position position="82"/>
    </location>
    <ligand>
        <name>a divalent metal cation</name>
        <dbReference type="ChEBI" id="CHEBI:60240"/>
    </ligand>
</feature>
<feature type="binding site" evidence="5 16">
    <location>
        <position position="84"/>
    </location>
    <ligand>
        <name>a divalent metal cation</name>
        <dbReference type="ChEBI" id="CHEBI:60240"/>
    </ligand>
</feature>
<feature type="binding site" evidence="1">
    <location>
        <begin position="108"/>
        <end position="109"/>
    </location>
    <ligand>
        <name>substrate</name>
    </ligand>
</feature>
<feature type="binding site" evidence="1">
    <location>
        <begin position="112"/>
        <end position="120"/>
    </location>
    <ligand>
        <name>substrate</name>
    </ligand>
</feature>
<feature type="binding site" evidence="5 16">
    <location>
        <position position="116"/>
    </location>
    <ligand>
        <name>a divalent metal cation</name>
        <dbReference type="ChEBI" id="CHEBI:60240"/>
    </ligand>
</feature>
<feature type="binding site" evidence="5 16">
    <location>
        <begin position="130"/>
        <end position="132"/>
    </location>
    <ligand>
        <name>substrate</name>
    </ligand>
</feature>
<feature type="binding site" evidence="1">
    <location>
        <begin position="135"/>
        <end position="139"/>
    </location>
    <ligand>
        <name>substrate</name>
    </ligand>
</feature>
<feature type="binding site" evidence="1">
    <location>
        <position position="139"/>
    </location>
    <ligand>
        <name>substrate</name>
    </ligand>
</feature>
<feature type="binding site" evidence="5 16">
    <location>
        <begin position="174"/>
        <end position="180"/>
    </location>
    <ligand>
        <name>substrate</name>
    </ligand>
</feature>
<feature type="binding site" evidence="1">
    <location>
        <begin position="205"/>
        <end position="209"/>
    </location>
    <ligand>
        <name>substrate</name>
    </ligand>
</feature>
<feature type="site" description="Transition state stabilizer" evidence="1">
    <location>
        <position position="108"/>
    </location>
</feature>
<feature type="site" description="Transition state stabilizer" evidence="1">
    <location>
        <position position="207"/>
    </location>
</feature>
<feature type="splice variant" id="VSP_009112" description="In isoform 2." evidence="8">
    <location>
        <begin position="111"/>
        <end position="118"/>
    </location>
</feature>
<feature type="sequence conflict" description="In Ref. 1; AAG35071 and 5; AAM62786." evidence="9" ref="1 5">
    <original>V</original>
    <variation>D</variation>
    <location>
        <position position="98"/>
    </location>
</feature>
<feature type="sequence conflict" description="In Ref. 1; AAG35071." evidence="9" ref="1">
    <original>G</original>
    <variation>E</variation>
    <location>
        <position position="144"/>
    </location>
</feature>
<feature type="sequence conflict" description="In Ref. 5; AAM62786." evidence="9" ref="5">
    <original>G</original>
    <variation>A</variation>
    <location>
        <position position="166"/>
    </location>
</feature>
<feature type="sequence conflict" description="In Ref. 1; AAG35071." evidence="9" ref="1">
    <original>I</original>
    <variation>V</variation>
    <location>
        <position position="220"/>
    </location>
</feature>
<feature type="strand" evidence="17">
    <location>
        <begin position="74"/>
        <end position="88"/>
    </location>
</feature>
<feature type="strand" evidence="17">
    <location>
        <begin position="102"/>
        <end position="105"/>
    </location>
</feature>
<feature type="strand" evidence="17">
    <location>
        <begin position="107"/>
        <end position="109"/>
    </location>
</feature>
<feature type="helix" evidence="17">
    <location>
        <begin position="113"/>
        <end position="126"/>
    </location>
</feature>
<feature type="helix" evidence="17">
    <location>
        <begin position="131"/>
        <end position="134"/>
    </location>
</feature>
<feature type="helix" evidence="17">
    <location>
        <begin position="147"/>
        <end position="161"/>
    </location>
</feature>
<feature type="strand" evidence="17">
    <location>
        <begin position="163"/>
        <end position="173"/>
    </location>
</feature>
<feature type="strand" evidence="17">
    <location>
        <begin position="175"/>
        <end position="177"/>
    </location>
</feature>
<feature type="helix" evidence="17">
    <location>
        <begin position="180"/>
        <end position="182"/>
    </location>
</feature>
<feature type="helix" evidence="17">
    <location>
        <begin position="183"/>
        <end position="194"/>
    </location>
</feature>
<feature type="helix" evidence="17">
    <location>
        <begin position="198"/>
        <end position="200"/>
    </location>
</feature>
<feature type="strand" evidence="17">
    <location>
        <begin position="201"/>
        <end position="206"/>
    </location>
</feature>
<feature type="helix" evidence="17">
    <location>
        <begin position="212"/>
        <end position="215"/>
    </location>
</feature>
<feature type="strand" evidence="17">
    <location>
        <begin position="218"/>
        <end position="230"/>
    </location>
</feature>
<keyword id="KW-0002">3D-structure</keyword>
<keyword id="KW-0025">Alternative splicing</keyword>
<keyword id="KW-0150">Chloroplast</keyword>
<keyword id="KW-0414">Isoprene biosynthesis</keyword>
<keyword id="KW-0456">Lyase</keyword>
<keyword id="KW-0479">Metal-binding</keyword>
<keyword id="KW-0934">Plastid</keyword>
<keyword id="KW-1185">Reference proteome</keyword>
<keyword id="KW-0809">Transit peptide</keyword>
<reference key="1">
    <citation type="submission" date="2000-11" db="EMBL/GenBank/DDBJ databases">
        <title>2C-methyl-D-erythritol 2,4-cyclodiphosphate synthase from Arabidopsis thaliana.</title>
        <authorList>
            <person name="Rohdich F."/>
        </authorList>
    </citation>
    <scope>NUCLEOTIDE SEQUENCE [MRNA] (ISOFORM 2)</scope>
</reference>
<reference key="2">
    <citation type="journal article" date="2000" name="Nature">
        <title>Sequence and analysis of chromosome 1 of the plant Arabidopsis thaliana.</title>
        <authorList>
            <person name="Theologis A."/>
            <person name="Ecker J.R."/>
            <person name="Palm C.J."/>
            <person name="Federspiel N.A."/>
            <person name="Kaul S."/>
            <person name="White O."/>
            <person name="Alonso J."/>
            <person name="Altafi H."/>
            <person name="Araujo R."/>
            <person name="Bowman C.L."/>
            <person name="Brooks S.Y."/>
            <person name="Buehler E."/>
            <person name="Chan A."/>
            <person name="Chao Q."/>
            <person name="Chen H."/>
            <person name="Cheuk R.F."/>
            <person name="Chin C.W."/>
            <person name="Chung M.K."/>
            <person name="Conn L."/>
            <person name="Conway A.B."/>
            <person name="Conway A.R."/>
            <person name="Creasy T.H."/>
            <person name="Dewar K."/>
            <person name="Dunn P."/>
            <person name="Etgu P."/>
            <person name="Feldblyum T.V."/>
            <person name="Feng J.-D."/>
            <person name="Fong B."/>
            <person name="Fujii C.Y."/>
            <person name="Gill J.E."/>
            <person name="Goldsmith A.D."/>
            <person name="Haas B."/>
            <person name="Hansen N.F."/>
            <person name="Hughes B."/>
            <person name="Huizar L."/>
            <person name="Hunter J.L."/>
            <person name="Jenkins J."/>
            <person name="Johnson-Hopson C."/>
            <person name="Khan S."/>
            <person name="Khaykin E."/>
            <person name="Kim C.J."/>
            <person name="Koo H.L."/>
            <person name="Kremenetskaia I."/>
            <person name="Kurtz D.B."/>
            <person name="Kwan A."/>
            <person name="Lam B."/>
            <person name="Langin-Hooper S."/>
            <person name="Lee A."/>
            <person name="Lee J.M."/>
            <person name="Lenz C.A."/>
            <person name="Li J.H."/>
            <person name="Li Y.-P."/>
            <person name="Lin X."/>
            <person name="Liu S.X."/>
            <person name="Liu Z.A."/>
            <person name="Luros J.S."/>
            <person name="Maiti R."/>
            <person name="Marziali A."/>
            <person name="Militscher J."/>
            <person name="Miranda M."/>
            <person name="Nguyen M."/>
            <person name="Nierman W.C."/>
            <person name="Osborne B.I."/>
            <person name="Pai G."/>
            <person name="Peterson J."/>
            <person name="Pham P.K."/>
            <person name="Rizzo M."/>
            <person name="Rooney T."/>
            <person name="Rowley D."/>
            <person name="Sakano H."/>
            <person name="Salzberg S.L."/>
            <person name="Schwartz J.R."/>
            <person name="Shinn P."/>
            <person name="Southwick A.M."/>
            <person name="Sun H."/>
            <person name="Tallon L.J."/>
            <person name="Tambunga G."/>
            <person name="Toriumi M.J."/>
            <person name="Town C.D."/>
            <person name="Utterback T."/>
            <person name="Van Aken S."/>
            <person name="Vaysberg M."/>
            <person name="Vysotskaia V.S."/>
            <person name="Walker M."/>
            <person name="Wu D."/>
            <person name="Yu G."/>
            <person name="Fraser C.M."/>
            <person name="Venter J.C."/>
            <person name="Davis R.W."/>
        </authorList>
    </citation>
    <scope>NUCLEOTIDE SEQUENCE [LARGE SCALE GENOMIC DNA]</scope>
    <source>
        <strain>cv. Columbia</strain>
    </source>
</reference>
<reference key="3">
    <citation type="journal article" date="2017" name="Plant J.">
        <title>Araport11: a complete reannotation of the Arabidopsis thaliana reference genome.</title>
        <authorList>
            <person name="Cheng C.Y."/>
            <person name="Krishnakumar V."/>
            <person name="Chan A.P."/>
            <person name="Thibaud-Nissen F."/>
            <person name="Schobel S."/>
            <person name="Town C.D."/>
        </authorList>
    </citation>
    <scope>GENOME REANNOTATION</scope>
    <source>
        <strain>cv. Columbia</strain>
    </source>
</reference>
<reference key="4">
    <citation type="journal article" date="2003" name="Science">
        <title>Empirical analysis of transcriptional activity in the Arabidopsis genome.</title>
        <authorList>
            <person name="Yamada K."/>
            <person name="Lim J."/>
            <person name="Dale J.M."/>
            <person name="Chen H."/>
            <person name="Shinn P."/>
            <person name="Palm C.J."/>
            <person name="Southwick A.M."/>
            <person name="Wu H.C."/>
            <person name="Kim C.J."/>
            <person name="Nguyen M."/>
            <person name="Pham P.K."/>
            <person name="Cheuk R.F."/>
            <person name="Karlin-Newmann G."/>
            <person name="Liu S.X."/>
            <person name="Lam B."/>
            <person name="Sakano H."/>
            <person name="Wu T."/>
            <person name="Yu G."/>
            <person name="Miranda M."/>
            <person name="Quach H.L."/>
            <person name="Tripp M."/>
            <person name="Chang C.H."/>
            <person name="Lee J.M."/>
            <person name="Toriumi M.J."/>
            <person name="Chan M.M."/>
            <person name="Tang C.C."/>
            <person name="Onodera C.S."/>
            <person name="Deng J.M."/>
            <person name="Akiyama K."/>
            <person name="Ansari Y."/>
            <person name="Arakawa T."/>
            <person name="Banh J."/>
            <person name="Banno F."/>
            <person name="Bowser L."/>
            <person name="Brooks S.Y."/>
            <person name="Carninci P."/>
            <person name="Chao Q."/>
            <person name="Choy N."/>
            <person name="Enju A."/>
            <person name="Goldsmith A.D."/>
            <person name="Gurjal M."/>
            <person name="Hansen N.F."/>
            <person name="Hayashizaki Y."/>
            <person name="Johnson-Hopson C."/>
            <person name="Hsuan V.W."/>
            <person name="Iida K."/>
            <person name="Karnes M."/>
            <person name="Khan S."/>
            <person name="Koesema E."/>
            <person name="Ishida J."/>
            <person name="Jiang P.X."/>
            <person name="Jones T."/>
            <person name="Kawai J."/>
            <person name="Kamiya A."/>
            <person name="Meyers C."/>
            <person name="Nakajima M."/>
            <person name="Narusaka M."/>
            <person name="Seki M."/>
            <person name="Sakurai T."/>
            <person name="Satou M."/>
            <person name="Tamse R."/>
            <person name="Vaysberg M."/>
            <person name="Wallender E.K."/>
            <person name="Wong C."/>
            <person name="Yamamura Y."/>
            <person name="Yuan S."/>
            <person name="Shinozaki K."/>
            <person name="Davis R.W."/>
            <person name="Theologis A."/>
            <person name="Ecker J.R."/>
        </authorList>
    </citation>
    <scope>NUCLEOTIDE SEQUENCE [LARGE SCALE MRNA] (ISOFORM 1)</scope>
    <source>
        <strain>cv. Columbia</strain>
    </source>
</reference>
<reference key="5">
    <citation type="submission" date="2002-03" db="EMBL/GenBank/DDBJ databases">
        <title>Full-length cDNA from Arabidopsis thaliana.</title>
        <authorList>
            <person name="Brover V.V."/>
            <person name="Troukhan M.E."/>
            <person name="Alexandrov N.A."/>
            <person name="Lu Y.-P."/>
            <person name="Flavell R.B."/>
            <person name="Feldmann K.A."/>
        </authorList>
    </citation>
    <scope>NUCLEOTIDE SEQUENCE [LARGE SCALE MRNA] (ISOFORM 1)</scope>
</reference>
<reference key="6">
    <citation type="journal article" date="2005" name="Plant Physiol.">
        <title>The Arabidopsis IspH homolog is involved in the plastid nonmevalonate pathway of isoprenoid biosynthesis.</title>
        <authorList>
            <person name="Hsieh M.H."/>
            <person name="Goodman H.M."/>
        </authorList>
    </citation>
    <scope>INDUCTION</scope>
</reference>
<reference key="7">
    <citation type="journal article" date="2006" name="Planta">
        <title>Functional evidence for the involvement of Arabidopsis IspF homolog in the nonmevalonate pathway of plastid isoprenoid biosynthesis.</title>
        <authorList>
            <person name="Hsieh M.H."/>
            <person name="Goodman H.M."/>
        </authorList>
    </citation>
    <scope>FUNCTION</scope>
    <scope>CATALYTIC ACTIVITY</scope>
    <scope>DISRUPTION PHENOTYPE</scope>
</reference>
<reference key="8">
    <citation type="journal article" date="2008" name="Plant Mol. Biol.">
        <title>Chloroplast localization of methylerythritol 4-phosphate pathway enzymes and regulation of mitochondrial genes in ispD and ispE albino mutants in Arabidopsis.</title>
        <authorList>
            <person name="Hsieh M.H."/>
            <person name="Chang C.Y."/>
            <person name="Hsu S.J."/>
            <person name="Chen J.J."/>
        </authorList>
    </citation>
    <scope>SUBCELLULAR LOCATION</scope>
</reference>
<reference key="9">
    <citation type="journal article" date="2007" name="Protein Sci.">
        <title>Biosynthesis of isoprenoids in plants: structure of the 2C-methyl-D-erithrytol 2,4-cyclodiphosphate synthase from Arabidopsis thaliana. Comparison with the bacterial enzymes.</title>
        <authorList>
            <person name="Calisto B.M."/>
            <person name="Perez-Gil J."/>
            <person name="Bergua M."/>
            <person name="Querol-Audi J."/>
            <person name="Fita I."/>
            <person name="Imperial S."/>
        </authorList>
    </citation>
    <scope>X-RAY CRYSTALLOGRAPHY (2.30 ANGSTROMS) OF 72-231 IN COMPLEX WITH CMP AND ZINC IONS</scope>
    <scope>SUBUNIT</scope>
    <scope>COFACTOR</scope>
</reference>
<dbReference type="EC" id="4.6.1.12" evidence="10"/>
<dbReference type="EMBL" id="AF321531">
    <property type="protein sequence ID" value="AAG35071.1"/>
    <property type="molecule type" value="mRNA"/>
</dbReference>
<dbReference type="EMBL" id="AC007764">
    <property type="protein sequence ID" value="AAF24570.1"/>
    <property type="status" value="ALT_SEQ"/>
    <property type="molecule type" value="Genomic_DNA"/>
</dbReference>
<dbReference type="EMBL" id="AC010852">
    <property type="protein sequence ID" value="AAG52445.1"/>
    <property type="molecule type" value="Genomic_DNA"/>
</dbReference>
<dbReference type="EMBL" id="CP002684">
    <property type="protein sequence ID" value="AEE34174.1"/>
    <property type="molecule type" value="Genomic_DNA"/>
</dbReference>
<dbReference type="EMBL" id="AY059096">
    <property type="protein sequence ID" value="AAL15202.1"/>
    <property type="molecule type" value="mRNA"/>
</dbReference>
<dbReference type="EMBL" id="AF370154">
    <property type="protein sequence ID" value="AAK43969.1"/>
    <property type="molecule type" value="mRNA"/>
</dbReference>
<dbReference type="EMBL" id="AY085564">
    <property type="protein sequence ID" value="AAM62786.1"/>
    <property type="molecule type" value="mRNA"/>
</dbReference>
<dbReference type="PIR" id="H96664">
    <property type="entry name" value="H96664"/>
</dbReference>
<dbReference type="RefSeq" id="NP_001319313.1">
    <property type="nucleotide sequence ID" value="NM_001334142.1"/>
</dbReference>
<dbReference type="RefSeq" id="NP_850971.1">
    <molecule id="Q9CAK8-1"/>
    <property type="nucleotide sequence ID" value="NM_180640.3"/>
</dbReference>
<dbReference type="PDB" id="2PMP">
    <property type="method" value="X-ray"/>
    <property type="resolution" value="2.30 A"/>
    <property type="chains" value="A=72-231"/>
</dbReference>
<dbReference type="PDBsum" id="2PMP"/>
<dbReference type="SMR" id="Q9CAK8"/>
<dbReference type="BioGRID" id="27921">
    <property type="interactions" value="5"/>
</dbReference>
<dbReference type="FunCoup" id="Q9CAK8">
    <property type="interactions" value="940"/>
</dbReference>
<dbReference type="IntAct" id="Q9CAK8">
    <property type="interactions" value="6"/>
</dbReference>
<dbReference type="STRING" id="3702.Q9CAK8"/>
<dbReference type="BindingDB" id="Q9CAK8"/>
<dbReference type="ChEMBL" id="CHEMBL2285351"/>
<dbReference type="PaxDb" id="3702-AT1G63970.1"/>
<dbReference type="ProteomicsDB" id="250683">
    <molecule id="Q9CAK8-1"/>
</dbReference>
<dbReference type="EnsemblPlants" id="AT1G63970.1">
    <molecule id="Q9CAK8-1"/>
    <property type="protein sequence ID" value="AT1G63970.1"/>
    <property type="gene ID" value="AT1G63970"/>
</dbReference>
<dbReference type="GeneID" id="842700"/>
<dbReference type="Gramene" id="AT1G63970.1">
    <molecule id="Q9CAK8-1"/>
    <property type="protein sequence ID" value="AT1G63970.1"/>
    <property type="gene ID" value="AT1G63970"/>
</dbReference>
<dbReference type="KEGG" id="ath:AT1G63970"/>
<dbReference type="Araport" id="AT1G63970"/>
<dbReference type="TAIR" id="AT1G63970">
    <property type="gene designation" value="ISPF"/>
</dbReference>
<dbReference type="eggNOG" id="ENOG502QS77">
    <property type="taxonomic scope" value="Eukaryota"/>
</dbReference>
<dbReference type="HOGENOM" id="CLU_084630_0_1_1"/>
<dbReference type="InParanoid" id="Q9CAK8"/>
<dbReference type="OMA" id="LIHAIMD"/>
<dbReference type="PhylomeDB" id="Q9CAK8"/>
<dbReference type="BioCyc" id="ARA:AT1G63970-MONOMER"/>
<dbReference type="BioCyc" id="MetaCyc:AT1G63970-MONOMER"/>
<dbReference type="BRENDA" id="4.6.1.12">
    <property type="organism ID" value="399"/>
</dbReference>
<dbReference type="SABIO-RK" id="Q9CAK8"/>
<dbReference type="UniPathway" id="UPA00056">
    <property type="reaction ID" value="UER00095"/>
</dbReference>
<dbReference type="EvolutionaryTrace" id="Q9CAK8"/>
<dbReference type="PRO" id="PR:Q9CAK8"/>
<dbReference type="Proteomes" id="UP000006548">
    <property type="component" value="Chromosome 1"/>
</dbReference>
<dbReference type="ExpressionAtlas" id="Q9CAK8">
    <property type="expression patterns" value="baseline and differential"/>
</dbReference>
<dbReference type="GO" id="GO:0009507">
    <property type="term" value="C:chloroplast"/>
    <property type="evidence" value="ECO:0007005"/>
    <property type="project" value="TAIR"/>
</dbReference>
<dbReference type="GO" id="GO:0009570">
    <property type="term" value="C:chloroplast stroma"/>
    <property type="evidence" value="ECO:0007005"/>
    <property type="project" value="TAIR"/>
</dbReference>
<dbReference type="GO" id="GO:0008685">
    <property type="term" value="F:2-C-methyl-D-erythritol 2,4-cyclodiphosphate synthase activity"/>
    <property type="evidence" value="ECO:0007669"/>
    <property type="project" value="UniProtKB-EC"/>
</dbReference>
<dbReference type="GO" id="GO:0046872">
    <property type="term" value="F:metal ion binding"/>
    <property type="evidence" value="ECO:0007669"/>
    <property type="project" value="UniProtKB-KW"/>
</dbReference>
<dbReference type="GO" id="GO:0016117">
    <property type="term" value="P:carotenoid biosynthetic process"/>
    <property type="evidence" value="ECO:0000315"/>
    <property type="project" value="TAIR"/>
</dbReference>
<dbReference type="GO" id="GO:0015995">
    <property type="term" value="P:chlorophyll biosynthetic process"/>
    <property type="evidence" value="ECO:0000315"/>
    <property type="project" value="TAIR"/>
</dbReference>
<dbReference type="GO" id="GO:0019288">
    <property type="term" value="P:isopentenyl diphosphate biosynthetic process, methylerythritol 4-phosphate pathway"/>
    <property type="evidence" value="ECO:0007669"/>
    <property type="project" value="UniProtKB-UniPathway"/>
</dbReference>
<dbReference type="CDD" id="cd00554">
    <property type="entry name" value="MECDP_synthase"/>
    <property type="match status" value="1"/>
</dbReference>
<dbReference type="FunFam" id="3.30.1330.50:FF:000002">
    <property type="entry name" value="2-C-methyl-D-erythritol 2,4-cyclodiphosphate synthase"/>
    <property type="match status" value="1"/>
</dbReference>
<dbReference type="Gene3D" id="3.30.1330.50">
    <property type="entry name" value="2-C-methyl-D-erythritol 2,4-cyclodiphosphate synthase"/>
    <property type="match status" value="1"/>
</dbReference>
<dbReference type="HAMAP" id="MF_00107">
    <property type="entry name" value="IspF"/>
    <property type="match status" value="1"/>
</dbReference>
<dbReference type="InterPro" id="IPR003526">
    <property type="entry name" value="MECDP_synthase"/>
</dbReference>
<dbReference type="InterPro" id="IPR020555">
    <property type="entry name" value="MECDP_synthase_CS"/>
</dbReference>
<dbReference type="InterPro" id="IPR036571">
    <property type="entry name" value="MECDP_synthase_sf"/>
</dbReference>
<dbReference type="NCBIfam" id="TIGR00151">
    <property type="entry name" value="ispF"/>
    <property type="match status" value="1"/>
</dbReference>
<dbReference type="PANTHER" id="PTHR43181">
    <property type="entry name" value="2-C-METHYL-D-ERYTHRITOL 2,4-CYCLODIPHOSPHATE SYNTHASE, CHLOROPLASTIC"/>
    <property type="match status" value="1"/>
</dbReference>
<dbReference type="PANTHER" id="PTHR43181:SF1">
    <property type="entry name" value="2-C-METHYL-D-ERYTHRITOL 2,4-CYCLODIPHOSPHATE SYNTHASE, CHLOROPLASTIC"/>
    <property type="match status" value="1"/>
</dbReference>
<dbReference type="Pfam" id="PF02542">
    <property type="entry name" value="YgbB"/>
    <property type="match status" value="1"/>
</dbReference>
<dbReference type="SUPFAM" id="SSF69765">
    <property type="entry name" value="IpsF-like"/>
    <property type="match status" value="1"/>
</dbReference>
<dbReference type="PROSITE" id="PS01350">
    <property type="entry name" value="ISPF"/>
    <property type="match status" value="1"/>
</dbReference>
<gene>
    <name evidence="6" type="primary">ISPF</name>
    <name evidence="7" type="synonym">MCS</name>
    <name evidence="9" type="synonym">MDS</name>
    <name evidence="12" type="ordered locus">At1g63970</name>
    <name evidence="13" type="ORF">F22C12.26</name>
    <name evidence="15" type="ORF">T12P18.1</name>
</gene>
<name>ISPF_ARATH</name>
<proteinExistence type="evidence at protein level"/>
<sequence length="231" mass="24812">MATSSTQLLLSSSSLFHSQITKKPFLLPATKIGVWRPKKSLSLSCRPSASVSAASSAVDVNESVTSEKPTKTLPFRIGHGFDLHRLEPGYPLIIGGIVIPHDRGCEAHSDGDVLLHCVVDAILGALGLPDIGQIFPDSDPKWKGAASSVFIKEAVRLMDEAGYEIGNLDATLILQRPKISPHKETIRSNLSKLLGADPSVVNLKAKTHEKVDSLGENRSIAAHTVILLMKK</sequence>
<comment type="function">
    <text evidence="4">Enzyme of the plastid non-mevalonate pathway for isoprenoid biosynthesis that converts 4-diphosphocytidyl-2C-methyl-D-erythritol 2-phosphate into 2C-methyl-D-erythritol 2,4-cyclodiphosphate and CMP. Is essential for chloroplast development.</text>
</comment>
<comment type="catalytic activity">
    <reaction evidence="10">
        <text>4-CDP-2-C-methyl-D-erythritol 2-phosphate = 2-C-methyl-D-erythritol 2,4-cyclic diphosphate + CMP</text>
        <dbReference type="Rhea" id="RHEA:23864"/>
        <dbReference type="ChEBI" id="CHEBI:57919"/>
        <dbReference type="ChEBI" id="CHEBI:58483"/>
        <dbReference type="ChEBI" id="CHEBI:60377"/>
        <dbReference type="EC" id="4.6.1.12"/>
    </reaction>
</comment>
<comment type="cofactor">
    <cofactor evidence="5">
        <name>a divalent metal cation</name>
        <dbReference type="ChEBI" id="CHEBI:60240"/>
    </cofactor>
    <text evidence="5">Binds 1 divalent metal cation per subunit.</text>
</comment>
<comment type="pathway">
    <text evidence="9">Isoprenoid biosynthesis; isopentenyl diphosphate biosynthesis via DXP pathway; isopentenyl diphosphate from 1-deoxy-D-xylulose 5-phosphate: step 4/6.</text>
</comment>
<comment type="subunit">
    <text evidence="5">Homotrimer.</text>
</comment>
<comment type="subcellular location">
    <subcellularLocation>
        <location evidence="11">Plastid</location>
        <location evidence="11">Chloroplast stroma</location>
    </subcellularLocation>
</comment>
<comment type="alternative products">
    <event type="alternative splicing"/>
    <isoform>
        <id>Q9CAK8-1</id>
        <name>1</name>
        <sequence type="displayed"/>
    </isoform>
    <isoform>
        <id>Q9CAK8-2</id>
        <name>2</name>
        <sequence type="described" ref="VSP_009112"/>
    </isoform>
</comment>
<comment type="induction">
    <text evidence="3">Circadian-regulated with a peak in the late period of dark phase and early period of the light phase.</text>
</comment>
<comment type="disruption phenotype">
    <text evidence="4">Albino phenotype and seedling lethal when homozygous. The phenotype is caused by an early arrest in chloroplast differentiation.</text>
</comment>
<comment type="miscellaneous">
    <molecule>Isoform 2</molecule>
    <text evidence="9">May be due to a competing acceptor splice site.</text>
</comment>
<comment type="similarity">
    <text evidence="9">Belongs to the IspF family.</text>
</comment>
<comment type="sequence caution" evidence="9">
    <conflict type="erroneous gene model prediction">
        <sequence resource="EMBL-CDS" id="AAF24570"/>
    </conflict>
</comment>
<protein>
    <recommendedName>
        <fullName evidence="9">2-C-methyl-D-erythritol 2,4-cyclodiphosphate synthase, chloroplastic</fullName>
        <shortName evidence="14">MECDP-synthase</shortName>
        <shortName evidence="9">MECPS</shortName>
        <shortName evidence="9">MECS</shortName>
        <ecNumber evidence="10">4.6.1.12</ecNumber>
    </recommendedName>
</protein>
<accession>Q9CAK8</accession>
<accession>Q8LE87</accession>
<accession>Q9GDE3</accession>
<accession>Q9SH48</accession>
<evidence type="ECO:0000250" key="1">
    <source>
        <dbReference type="UniProtKB" id="P62617"/>
    </source>
</evidence>
<evidence type="ECO:0000255" key="2"/>
<evidence type="ECO:0000269" key="3">
    <source>
    </source>
</evidence>
<evidence type="ECO:0000269" key="4">
    <source>
    </source>
</evidence>
<evidence type="ECO:0000269" key="5">
    <source>
    </source>
</evidence>
<evidence type="ECO:0000303" key="6">
    <source>
    </source>
</evidence>
<evidence type="ECO:0000303" key="7">
    <source>
    </source>
</evidence>
<evidence type="ECO:0000303" key="8">
    <source ref="1"/>
</evidence>
<evidence type="ECO:0000305" key="9"/>
<evidence type="ECO:0000305" key="10">
    <source>
    </source>
</evidence>
<evidence type="ECO:0000305" key="11">
    <source>
    </source>
</evidence>
<evidence type="ECO:0000312" key="12">
    <source>
        <dbReference type="Araport" id="AT1G63970"/>
    </source>
</evidence>
<evidence type="ECO:0000312" key="13">
    <source>
        <dbReference type="EMBL" id="AAF24570.1"/>
    </source>
</evidence>
<evidence type="ECO:0000312" key="14">
    <source>
        <dbReference type="EMBL" id="AAG35071.1"/>
    </source>
</evidence>
<evidence type="ECO:0000312" key="15">
    <source>
        <dbReference type="EMBL" id="AAG52445.1"/>
    </source>
</evidence>
<evidence type="ECO:0007744" key="16">
    <source>
        <dbReference type="PDB" id="2PMP"/>
    </source>
</evidence>
<evidence type="ECO:0007829" key="17">
    <source>
        <dbReference type="PDB" id="2PMP"/>
    </source>
</evidence>